<sequence length="514" mass="56322">MSVSKKPMVLVILDGYGYREDSQDNAIFNAKTPVMDALWAQRPHTLIDASGLEVGLPDRQMGNSEVGHVNLGAGRIVYQDLTRLDVEIKERTFFSNPTLTGAVDKAVSAGKAVHIMGLLSAGGVHSHEDHILAMVEMAAERGAEKIYLHAFLDGRDTPPRSAKSSLQTFEDKFAELGKGRVASIIGRYYAMDRDNRWDRVEQAYDLMTMAKGEFQFDTAVAGLEAAYARDENDEFVKATVIRAEGQADAAMEDGDALIFMNFRADRAREITRAFVNADFDGFARKKVVNLNFIMLTEYAADIKVPCAYPPASLANTLGEWMAKHDKTQLRISETEKYAHVTFFFNGGVEEPFKGEDRILINSPKVATYDLQPEMSSAELTEKLVAAITSGKYDTIICNYPNGDMVGHTGVMEAAVKAVETLDHCVEQVAKAVESVGGQLLITADHGNAEQMRDPSTGQAHTAHTNLPVPLIYVGEKSLKAVEGGKLSDIAPTMLTLMGMEIPKEMTGKPLFIVE</sequence>
<gene>
    <name evidence="1" type="primary">gpmI</name>
    <name type="ordered locus">Ent638_0123</name>
</gene>
<accession>A4W533</accession>
<keyword id="KW-0324">Glycolysis</keyword>
<keyword id="KW-0413">Isomerase</keyword>
<keyword id="KW-0464">Manganese</keyword>
<keyword id="KW-0479">Metal-binding</keyword>
<feature type="chain" id="PRO_1000063965" description="2,3-bisphosphoglycerate-independent phosphoglycerate mutase">
    <location>
        <begin position="1"/>
        <end position="514"/>
    </location>
</feature>
<feature type="active site" description="Phosphoserine intermediate" evidence="1">
    <location>
        <position position="64"/>
    </location>
</feature>
<feature type="binding site" evidence="1">
    <location>
        <position position="14"/>
    </location>
    <ligand>
        <name>Mn(2+)</name>
        <dbReference type="ChEBI" id="CHEBI:29035"/>
        <label>2</label>
    </ligand>
</feature>
<feature type="binding site" evidence="1">
    <location>
        <position position="64"/>
    </location>
    <ligand>
        <name>Mn(2+)</name>
        <dbReference type="ChEBI" id="CHEBI:29035"/>
        <label>2</label>
    </ligand>
</feature>
<feature type="binding site" evidence="1">
    <location>
        <position position="125"/>
    </location>
    <ligand>
        <name>substrate</name>
    </ligand>
</feature>
<feature type="binding site" evidence="1">
    <location>
        <begin position="155"/>
        <end position="156"/>
    </location>
    <ligand>
        <name>substrate</name>
    </ligand>
</feature>
<feature type="binding site" evidence="1">
    <location>
        <position position="187"/>
    </location>
    <ligand>
        <name>substrate</name>
    </ligand>
</feature>
<feature type="binding site" evidence="1">
    <location>
        <position position="193"/>
    </location>
    <ligand>
        <name>substrate</name>
    </ligand>
</feature>
<feature type="binding site" evidence="1">
    <location>
        <begin position="263"/>
        <end position="266"/>
    </location>
    <ligand>
        <name>substrate</name>
    </ligand>
</feature>
<feature type="binding site" evidence="1">
    <location>
        <position position="336"/>
    </location>
    <ligand>
        <name>substrate</name>
    </ligand>
</feature>
<feature type="binding site" evidence="1">
    <location>
        <position position="403"/>
    </location>
    <ligand>
        <name>Mn(2+)</name>
        <dbReference type="ChEBI" id="CHEBI:29035"/>
        <label>1</label>
    </ligand>
</feature>
<feature type="binding site" evidence="1">
    <location>
        <position position="407"/>
    </location>
    <ligand>
        <name>Mn(2+)</name>
        <dbReference type="ChEBI" id="CHEBI:29035"/>
        <label>1</label>
    </ligand>
</feature>
<feature type="binding site" evidence="1">
    <location>
        <position position="444"/>
    </location>
    <ligand>
        <name>Mn(2+)</name>
        <dbReference type="ChEBI" id="CHEBI:29035"/>
        <label>2</label>
    </ligand>
</feature>
<feature type="binding site" evidence="1">
    <location>
        <position position="445"/>
    </location>
    <ligand>
        <name>Mn(2+)</name>
        <dbReference type="ChEBI" id="CHEBI:29035"/>
        <label>2</label>
    </ligand>
</feature>
<feature type="binding site" evidence="1">
    <location>
        <position position="463"/>
    </location>
    <ligand>
        <name>Mn(2+)</name>
        <dbReference type="ChEBI" id="CHEBI:29035"/>
        <label>1</label>
    </ligand>
</feature>
<name>GPMI_ENT38</name>
<reference key="1">
    <citation type="journal article" date="2010" name="PLoS Genet.">
        <title>Genome sequence of the plant growth promoting endophytic bacterium Enterobacter sp. 638.</title>
        <authorList>
            <person name="Taghavi S."/>
            <person name="van der Lelie D."/>
            <person name="Hoffman A."/>
            <person name="Zhang Y.B."/>
            <person name="Walla M.D."/>
            <person name="Vangronsveld J."/>
            <person name="Newman L."/>
            <person name="Monchy S."/>
        </authorList>
    </citation>
    <scope>NUCLEOTIDE SEQUENCE [LARGE SCALE GENOMIC DNA]</scope>
    <source>
        <strain>638</strain>
    </source>
</reference>
<protein>
    <recommendedName>
        <fullName evidence="1">2,3-bisphosphoglycerate-independent phosphoglycerate mutase</fullName>
        <shortName evidence="1">BPG-independent PGAM</shortName>
        <shortName evidence="1">Phosphoglyceromutase</shortName>
        <shortName evidence="1">iPGM</shortName>
        <ecNumber evidence="1">5.4.2.12</ecNumber>
    </recommendedName>
</protein>
<comment type="function">
    <text evidence="1">Catalyzes the interconversion of 2-phosphoglycerate and 3-phosphoglycerate.</text>
</comment>
<comment type="catalytic activity">
    <reaction evidence="1">
        <text>(2R)-2-phosphoglycerate = (2R)-3-phosphoglycerate</text>
        <dbReference type="Rhea" id="RHEA:15901"/>
        <dbReference type="ChEBI" id="CHEBI:58272"/>
        <dbReference type="ChEBI" id="CHEBI:58289"/>
        <dbReference type="EC" id="5.4.2.12"/>
    </reaction>
</comment>
<comment type="cofactor">
    <cofactor evidence="1">
        <name>Mn(2+)</name>
        <dbReference type="ChEBI" id="CHEBI:29035"/>
    </cofactor>
    <text evidence="1">Binds 2 manganese ions per subunit.</text>
</comment>
<comment type="pathway">
    <text evidence="1">Carbohydrate degradation; glycolysis; pyruvate from D-glyceraldehyde 3-phosphate: step 3/5.</text>
</comment>
<comment type="subunit">
    <text evidence="1">Monomer.</text>
</comment>
<comment type="similarity">
    <text evidence="1">Belongs to the BPG-independent phosphoglycerate mutase family.</text>
</comment>
<proteinExistence type="inferred from homology"/>
<evidence type="ECO:0000255" key="1">
    <source>
        <dbReference type="HAMAP-Rule" id="MF_01038"/>
    </source>
</evidence>
<organism>
    <name type="scientific">Enterobacter sp. (strain 638)</name>
    <dbReference type="NCBI Taxonomy" id="399742"/>
    <lineage>
        <taxon>Bacteria</taxon>
        <taxon>Pseudomonadati</taxon>
        <taxon>Pseudomonadota</taxon>
        <taxon>Gammaproteobacteria</taxon>
        <taxon>Enterobacterales</taxon>
        <taxon>Enterobacteriaceae</taxon>
        <taxon>Enterobacter</taxon>
    </lineage>
</organism>
<dbReference type="EC" id="5.4.2.12" evidence="1"/>
<dbReference type="EMBL" id="CP000653">
    <property type="protein sequence ID" value="ABP58813.1"/>
    <property type="molecule type" value="Genomic_DNA"/>
</dbReference>
<dbReference type="RefSeq" id="WP_011915389.1">
    <property type="nucleotide sequence ID" value="NC_009436.1"/>
</dbReference>
<dbReference type="SMR" id="A4W533"/>
<dbReference type="STRING" id="399742.Ent638_0123"/>
<dbReference type="KEGG" id="ent:Ent638_0123"/>
<dbReference type="eggNOG" id="COG0696">
    <property type="taxonomic scope" value="Bacteria"/>
</dbReference>
<dbReference type="HOGENOM" id="CLU_026099_2_0_6"/>
<dbReference type="OrthoDB" id="9800863at2"/>
<dbReference type="UniPathway" id="UPA00109">
    <property type="reaction ID" value="UER00186"/>
</dbReference>
<dbReference type="Proteomes" id="UP000000230">
    <property type="component" value="Chromosome"/>
</dbReference>
<dbReference type="GO" id="GO:0005829">
    <property type="term" value="C:cytosol"/>
    <property type="evidence" value="ECO:0007669"/>
    <property type="project" value="TreeGrafter"/>
</dbReference>
<dbReference type="GO" id="GO:0030145">
    <property type="term" value="F:manganese ion binding"/>
    <property type="evidence" value="ECO:0007669"/>
    <property type="project" value="UniProtKB-UniRule"/>
</dbReference>
<dbReference type="GO" id="GO:0004619">
    <property type="term" value="F:phosphoglycerate mutase activity"/>
    <property type="evidence" value="ECO:0007669"/>
    <property type="project" value="UniProtKB-EC"/>
</dbReference>
<dbReference type="GO" id="GO:0006007">
    <property type="term" value="P:glucose catabolic process"/>
    <property type="evidence" value="ECO:0007669"/>
    <property type="project" value="InterPro"/>
</dbReference>
<dbReference type="GO" id="GO:0006096">
    <property type="term" value="P:glycolytic process"/>
    <property type="evidence" value="ECO:0007669"/>
    <property type="project" value="UniProtKB-UniRule"/>
</dbReference>
<dbReference type="CDD" id="cd16010">
    <property type="entry name" value="iPGM"/>
    <property type="match status" value="1"/>
</dbReference>
<dbReference type="FunFam" id="3.40.1450.10:FF:000001">
    <property type="entry name" value="2,3-bisphosphoglycerate-independent phosphoglycerate mutase"/>
    <property type="match status" value="1"/>
</dbReference>
<dbReference type="FunFam" id="3.40.720.10:FF:000001">
    <property type="entry name" value="2,3-bisphosphoglycerate-independent phosphoglycerate mutase"/>
    <property type="match status" value="1"/>
</dbReference>
<dbReference type="Gene3D" id="3.40.720.10">
    <property type="entry name" value="Alkaline Phosphatase, subunit A"/>
    <property type="match status" value="1"/>
</dbReference>
<dbReference type="Gene3D" id="3.40.1450.10">
    <property type="entry name" value="BPG-independent phosphoglycerate mutase, domain B"/>
    <property type="match status" value="1"/>
</dbReference>
<dbReference type="HAMAP" id="MF_01038">
    <property type="entry name" value="GpmI"/>
    <property type="match status" value="1"/>
</dbReference>
<dbReference type="InterPro" id="IPR017850">
    <property type="entry name" value="Alkaline_phosphatase_core_sf"/>
</dbReference>
<dbReference type="InterPro" id="IPR011258">
    <property type="entry name" value="BPG-indep_PGM_N"/>
</dbReference>
<dbReference type="InterPro" id="IPR006124">
    <property type="entry name" value="Metalloenzyme"/>
</dbReference>
<dbReference type="InterPro" id="IPR036646">
    <property type="entry name" value="PGAM_B_sf"/>
</dbReference>
<dbReference type="InterPro" id="IPR005995">
    <property type="entry name" value="Pgm_bpd_ind"/>
</dbReference>
<dbReference type="NCBIfam" id="TIGR01307">
    <property type="entry name" value="pgm_bpd_ind"/>
    <property type="match status" value="1"/>
</dbReference>
<dbReference type="NCBIfam" id="NF003897">
    <property type="entry name" value="PRK05434.1-5"/>
    <property type="match status" value="1"/>
</dbReference>
<dbReference type="PANTHER" id="PTHR31637">
    <property type="entry name" value="2,3-BISPHOSPHOGLYCERATE-INDEPENDENT PHOSPHOGLYCERATE MUTASE"/>
    <property type="match status" value="1"/>
</dbReference>
<dbReference type="PANTHER" id="PTHR31637:SF0">
    <property type="entry name" value="2,3-BISPHOSPHOGLYCERATE-INDEPENDENT PHOSPHOGLYCERATE MUTASE"/>
    <property type="match status" value="1"/>
</dbReference>
<dbReference type="Pfam" id="PF06415">
    <property type="entry name" value="iPGM_N"/>
    <property type="match status" value="1"/>
</dbReference>
<dbReference type="Pfam" id="PF01676">
    <property type="entry name" value="Metalloenzyme"/>
    <property type="match status" value="1"/>
</dbReference>
<dbReference type="PIRSF" id="PIRSF001492">
    <property type="entry name" value="IPGAM"/>
    <property type="match status" value="1"/>
</dbReference>
<dbReference type="SUPFAM" id="SSF64158">
    <property type="entry name" value="2,3-Bisphosphoglycerate-independent phosphoglycerate mutase, substrate-binding domain"/>
    <property type="match status" value="1"/>
</dbReference>
<dbReference type="SUPFAM" id="SSF53649">
    <property type="entry name" value="Alkaline phosphatase-like"/>
    <property type="match status" value="1"/>
</dbReference>